<sequence>MMNTIIGLILAYLLGSIPTGLWIGQIFFKKNLREYGSGNTGTTNTFRILGKTAGTATFAIDFLKGTAATLLPFFLHIEGVSPLVFGLLAVIGHTFPIFAGFKGGKAVATSAGVVLGFSPAFFVYLIVIFASILYLGSMISLASVLSAVIAILSALLFPLVGFILPSYDLFFTLIIIALALIIILRHKDNIQRIKQKKENLIPWGLNITHQNPEAKK</sequence>
<gene>
    <name evidence="1" type="primary">plsY</name>
    <name type="ordered locus">SSA_1233</name>
</gene>
<accession>A3CN81</accession>
<comment type="function">
    <text evidence="1">Catalyzes the transfer of an acyl group from acyl-phosphate (acyl-PO(4)) to glycerol-3-phosphate (G3P) to form lysophosphatidic acid (LPA). This enzyme utilizes acyl-phosphate as fatty acyl donor, but not acyl-CoA or acyl-ACP.</text>
</comment>
<comment type="catalytic activity">
    <reaction evidence="1">
        <text>an acyl phosphate + sn-glycerol 3-phosphate = a 1-acyl-sn-glycero-3-phosphate + phosphate</text>
        <dbReference type="Rhea" id="RHEA:34075"/>
        <dbReference type="ChEBI" id="CHEBI:43474"/>
        <dbReference type="ChEBI" id="CHEBI:57597"/>
        <dbReference type="ChEBI" id="CHEBI:57970"/>
        <dbReference type="ChEBI" id="CHEBI:59918"/>
        <dbReference type="EC" id="2.3.1.275"/>
    </reaction>
</comment>
<comment type="pathway">
    <text evidence="1">Lipid metabolism; phospholipid metabolism.</text>
</comment>
<comment type="subunit">
    <text evidence="1">Probably interacts with PlsX.</text>
</comment>
<comment type="subcellular location">
    <subcellularLocation>
        <location evidence="1">Cell membrane</location>
        <topology evidence="1">Multi-pass membrane protein</topology>
    </subcellularLocation>
</comment>
<comment type="similarity">
    <text evidence="1">Belongs to the PlsY family.</text>
</comment>
<protein>
    <recommendedName>
        <fullName evidence="1">Glycerol-3-phosphate acyltransferase</fullName>
    </recommendedName>
    <alternativeName>
        <fullName evidence="1">Acyl-PO4 G3P acyltransferase</fullName>
    </alternativeName>
    <alternativeName>
        <fullName evidence="1">Acyl-phosphate--glycerol-3-phosphate acyltransferase</fullName>
    </alternativeName>
    <alternativeName>
        <fullName evidence="1">G3P acyltransferase</fullName>
        <shortName evidence="1">GPAT</shortName>
        <ecNumber evidence="1">2.3.1.275</ecNumber>
    </alternativeName>
    <alternativeName>
        <fullName evidence="1">Lysophosphatidic acid synthase</fullName>
        <shortName evidence="1">LPA synthase</shortName>
    </alternativeName>
</protein>
<organism>
    <name type="scientific">Streptococcus sanguinis (strain SK36)</name>
    <dbReference type="NCBI Taxonomy" id="388919"/>
    <lineage>
        <taxon>Bacteria</taxon>
        <taxon>Bacillati</taxon>
        <taxon>Bacillota</taxon>
        <taxon>Bacilli</taxon>
        <taxon>Lactobacillales</taxon>
        <taxon>Streptococcaceae</taxon>
        <taxon>Streptococcus</taxon>
    </lineage>
</organism>
<dbReference type="EC" id="2.3.1.275" evidence="1"/>
<dbReference type="EMBL" id="CP000387">
    <property type="protein sequence ID" value="ABN44636.1"/>
    <property type="molecule type" value="Genomic_DNA"/>
</dbReference>
<dbReference type="RefSeq" id="WP_002912552.1">
    <property type="nucleotide sequence ID" value="NC_009009.1"/>
</dbReference>
<dbReference type="RefSeq" id="YP_001035186.1">
    <property type="nucleotide sequence ID" value="NC_009009.1"/>
</dbReference>
<dbReference type="SMR" id="A3CN81"/>
<dbReference type="STRING" id="388919.SSA_1233"/>
<dbReference type="KEGG" id="ssa:SSA_1233"/>
<dbReference type="PATRIC" id="fig|388919.9.peg.1173"/>
<dbReference type="eggNOG" id="COG0344">
    <property type="taxonomic scope" value="Bacteria"/>
</dbReference>
<dbReference type="HOGENOM" id="CLU_081254_4_0_9"/>
<dbReference type="OrthoDB" id="9777124at2"/>
<dbReference type="UniPathway" id="UPA00085"/>
<dbReference type="Proteomes" id="UP000002148">
    <property type="component" value="Chromosome"/>
</dbReference>
<dbReference type="GO" id="GO:0005886">
    <property type="term" value="C:plasma membrane"/>
    <property type="evidence" value="ECO:0007669"/>
    <property type="project" value="UniProtKB-SubCell"/>
</dbReference>
<dbReference type="GO" id="GO:0043772">
    <property type="term" value="F:acyl-phosphate glycerol-3-phosphate acyltransferase activity"/>
    <property type="evidence" value="ECO:0007669"/>
    <property type="project" value="UniProtKB-UniRule"/>
</dbReference>
<dbReference type="GO" id="GO:0008654">
    <property type="term" value="P:phospholipid biosynthetic process"/>
    <property type="evidence" value="ECO:0007669"/>
    <property type="project" value="UniProtKB-UniRule"/>
</dbReference>
<dbReference type="HAMAP" id="MF_01043">
    <property type="entry name" value="PlsY"/>
    <property type="match status" value="1"/>
</dbReference>
<dbReference type="InterPro" id="IPR003811">
    <property type="entry name" value="G3P_acylTferase_PlsY"/>
</dbReference>
<dbReference type="NCBIfam" id="TIGR00023">
    <property type="entry name" value="glycerol-3-phosphate 1-O-acyltransferase PlsY"/>
    <property type="match status" value="1"/>
</dbReference>
<dbReference type="PANTHER" id="PTHR30309:SF0">
    <property type="entry name" value="GLYCEROL-3-PHOSPHATE ACYLTRANSFERASE-RELATED"/>
    <property type="match status" value="1"/>
</dbReference>
<dbReference type="PANTHER" id="PTHR30309">
    <property type="entry name" value="INNER MEMBRANE PROTEIN YGIH"/>
    <property type="match status" value="1"/>
</dbReference>
<dbReference type="Pfam" id="PF02660">
    <property type="entry name" value="G3P_acyltransf"/>
    <property type="match status" value="1"/>
</dbReference>
<dbReference type="SMART" id="SM01207">
    <property type="entry name" value="G3P_acyltransf"/>
    <property type="match status" value="1"/>
</dbReference>
<name>PLSY_STRSV</name>
<feature type="chain" id="PRO_1000084400" description="Glycerol-3-phosphate acyltransferase">
    <location>
        <begin position="1"/>
        <end position="216"/>
    </location>
</feature>
<feature type="transmembrane region" description="Helical" evidence="1">
    <location>
        <begin position="4"/>
        <end position="24"/>
    </location>
</feature>
<feature type="transmembrane region" description="Helical" evidence="1">
    <location>
        <begin position="71"/>
        <end position="91"/>
    </location>
</feature>
<feature type="transmembrane region" description="Helical" evidence="1">
    <location>
        <begin position="113"/>
        <end position="133"/>
    </location>
</feature>
<feature type="transmembrane region" description="Helical" evidence="1">
    <location>
        <begin position="144"/>
        <end position="164"/>
    </location>
</feature>
<feature type="transmembrane region" description="Helical" evidence="1">
    <location>
        <begin position="165"/>
        <end position="185"/>
    </location>
</feature>
<keyword id="KW-1003">Cell membrane</keyword>
<keyword id="KW-0444">Lipid biosynthesis</keyword>
<keyword id="KW-0443">Lipid metabolism</keyword>
<keyword id="KW-0472">Membrane</keyword>
<keyword id="KW-0594">Phospholipid biosynthesis</keyword>
<keyword id="KW-1208">Phospholipid metabolism</keyword>
<keyword id="KW-1185">Reference proteome</keyword>
<keyword id="KW-0808">Transferase</keyword>
<keyword id="KW-0812">Transmembrane</keyword>
<keyword id="KW-1133">Transmembrane helix</keyword>
<proteinExistence type="inferred from homology"/>
<evidence type="ECO:0000255" key="1">
    <source>
        <dbReference type="HAMAP-Rule" id="MF_01043"/>
    </source>
</evidence>
<reference key="1">
    <citation type="journal article" date="2007" name="J. Bacteriol.">
        <title>Genome of the opportunistic pathogen Streptococcus sanguinis.</title>
        <authorList>
            <person name="Xu P."/>
            <person name="Alves J.M."/>
            <person name="Kitten T."/>
            <person name="Brown A."/>
            <person name="Chen Z."/>
            <person name="Ozaki L.S."/>
            <person name="Manque P."/>
            <person name="Ge X."/>
            <person name="Serrano M.G."/>
            <person name="Puiu D."/>
            <person name="Hendricks S."/>
            <person name="Wang Y."/>
            <person name="Chaplin M.D."/>
            <person name="Akan D."/>
            <person name="Paik S."/>
            <person name="Peterson D.L."/>
            <person name="Macrina F.L."/>
            <person name="Buck G.A."/>
        </authorList>
    </citation>
    <scope>NUCLEOTIDE SEQUENCE [LARGE SCALE GENOMIC DNA]</scope>
    <source>
        <strain>SK36</strain>
    </source>
</reference>